<name>ZNFDT_HUMAN</name>
<keyword id="KW-1185">Reference proteome</keyword>
<gene>
    <name evidence="3" type="primary">ZNF516-DT</name>
    <name type="synonym">C18orf65</name>
</gene>
<feature type="chain" id="PRO_0000431378" description="Putative uncharacterized protein ZNF516-DT">
    <location>
        <begin position="1"/>
        <end position="163"/>
    </location>
</feature>
<evidence type="ECO:0000305" key="1"/>
<evidence type="ECO:0000312" key="2">
    <source>
        <dbReference type="EMBL" id="BAC86516.1"/>
    </source>
</evidence>
<evidence type="ECO:0000312" key="3">
    <source>
        <dbReference type="HGNC" id="HGNC:51248"/>
    </source>
</evidence>
<protein>
    <recommendedName>
        <fullName evidence="1">Putative uncharacterized protein ZNF516-DT</fullName>
    </recommendedName>
    <alternativeName>
        <fullName evidence="3">ZNF516 divergent transcript</fullName>
    </alternativeName>
</protein>
<sequence length="163" mass="17236">MRVPPAGTWALRPIWTEMGTPLRGSQAPGRIVLLLLVITPQWRWIPSKTPNVAPRSNQRCNPGGYLSGGVSLCASHSQPAALPNLGRLQKKLLQTRCKGRRMCPKAGDQTGGAFCMCDVSGGGGECVSGSGGGGESGRKTGTTSAMKDPRVLKCKLRVTNDLH</sequence>
<accession>Q6ZTR6</accession>
<organism evidence="2">
    <name type="scientific">Homo sapiens</name>
    <name type="common">Human</name>
    <dbReference type="NCBI Taxonomy" id="9606"/>
    <lineage>
        <taxon>Eukaryota</taxon>
        <taxon>Metazoa</taxon>
        <taxon>Chordata</taxon>
        <taxon>Craniata</taxon>
        <taxon>Vertebrata</taxon>
        <taxon>Euteleostomi</taxon>
        <taxon>Mammalia</taxon>
        <taxon>Eutheria</taxon>
        <taxon>Euarchontoglires</taxon>
        <taxon>Primates</taxon>
        <taxon>Haplorrhini</taxon>
        <taxon>Catarrhini</taxon>
        <taxon>Hominidae</taxon>
        <taxon>Homo</taxon>
    </lineage>
</organism>
<comment type="caution">
    <text evidence="1">Product of a dubious gene prediction.</text>
</comment>
<reference key="1">
    <citation type="journal article" date="2004" name="Nat. Genet.">
        <title>Complete sequencing and characterization of 21,243 full-length human cDNAs.</title>
        <authorList>
            <person name="Ota T."/>
            <person name="Suzuki Y."/>
            <person name="Nishikawa T."/>
            <person name="Otsuki T."/>
            <person name="Sugiyama T."/>
            <person name="Irie R."/>
            <person name="Wakamatsu A."/>
            <person name="Hayashi K."/>
            <person name="Sato H."/>
            <person name="Nagai K."/>
            <person name="Kimura K."/>
            <person name="Makita H."/>
            <person name="Sekine M."/>
            <person name="Obayashi M."/>
            <person name="Nishi T."/>
            <person name="Shibahara T."/>
            <person name="Tanaka T."/>
            <person name="Ishii S."/>
            <person name="Yamamoto J."/>
            <person name="Saito K."/>
            <person name="Kawai Y."/>
            <person name="Isono Y."/>
            <person name="Nakamura Y."/>
            <person name="Nagahari K."/>
            <person name="Murakami K."/>
            <person name="Yasuda T."/>
            <person name="Iwayanagi T."/>
            <person name="Wagatsuma M."/>
            <person name="Shiratori A."/>
            <person name="Sudo H."/>
            <person name="Hosoiri T."/>
            <person name="Kaku Y."/>
            <person name="Kodaira H."/>
            <person name="Kondo H."/>
            <person name="Sugawara M."/>
            <person name="Takahashi M."/>
            <person name="Kanda K."/>
            <person name="Yokoi T."/>
            <person name="Furuya T."/>
            <person name="Kikkawa E."/>
            <person name="Omura Y."/>
            <person name="Abe K."/>
            <person name="Kamihara K."/>
            <person name="Katsuta N."/>
            <person name="Sato K."/>
            <person name="Tanikawa M."/>
            <person name="Yamazaki M."/>
            <person name="Ninomiya K."/>
            <person name="Ishibashi T."/>
            <person name="Yamashita H."/>
            <person name="Murakawa K."/>
            <person name="Fujimori K."/>
            <person name="Tanai H."/>
            <person name="Kimata M."/>
            <person name="Watanabe M."/>
            <person name="Hiraoka S."/>
            <person name="Chiba Y."/>
            <person name="Ishida S."/>
            <person name="Ono Y."/>
            <person name="Takiguchi S."/>
            <person name="Watanabe S."/>
            <person name="Yosida M."/>
            <person name="Hotuta T."/>
            <person name="Kusano J."/>
            <person name="Kanehori K."/>
            <person name="Takahashi-Fujii A."/>
            <person name="Hara H."/>
            <person name="Tanase T.-O."/>
            <person name="Nomura Y."/>
            <person name="Togiya S."/>
            <person name="Komai F."/>
            <person name="Hara R."/>
            <person name="Takeuchi K."/>
            <person name="Arita M."/>
            <person name="Imose N."/>
            <person name="Musashino K."/>
            <person name="Yuuki H."/>
            <person name="Oshima A."/>
            <person name="Sasaki N."/>
            <person name="Aotsuka S."/>
            <person name="Yoshikawa Y."/>
            <person name="Matsunawa H."/>
            <person name="Ichihara T."/>
            <person name="Shiohata N."/>
            <person name="Sano S."/>
            <person name="Moriya S."/>
            <person name="Momiyama H."/>
            <person name="Satoh N."/>
            <person name="Takami S."/>
            <person name="Terashima Y."/>
            <person name="Suzuki O."/>
            <person name="Nakagawa S."/>
            <person name="Senoh A."/>
            <person name="Mizoguchi H."/>
            <person name="Goto Y."/>
            <person name="Shimizu F."/>
            <person name="Wakebe H."/>
            <person name="Hishigaki H."/>
            <person name="Watanabe T."/>
            <person name="Sugiyama A."/>
            <person name="Takemoto M."/>
            <person name="Kawakami B."/>
            <person name="Yamazaki M."/>
            <person name="Watanabe K."/>
            <person name="Kumagai A."/>
            <person name="Itakura S."/>
            <person name="Fukuzumi Y."/>
            <person name="Fujimori Y."/>
            <person name="Komiyama M."/>
            <person name="Tashiro H."/>
            <person name="Tanigami A."/>
            <person name="Fujiwara T."/>
            <person name="Ono T."/>
            <person name="Yamada K."/>
            <person name="Fujii Y."/>
            <person name="Ozaki K."/>
            <person name="Hirao M."/>
            <person name="Ohmori Y."/>
            <person name="Kawabata A."/>
            <person name="Hikiji T."/>
            <person name="Kobatake N."/>
            <person name="Inagaki H."/>
            <person name="Ikema Y."/>
            <person name="Okamoto S."/>
            <person name="Okitani R."/>
            <person name="Kawakami T."/>
            <person name="Noguchi S."/>
            <person name="Itoh T."/>
            <person name="Shigeta K."/>
            <person name="Senba T."/>
            <person name="Matsumura K."/>
            <person name="Nakajima Y."/>
            <person name="Mizuno T."/>
            <person name="Morinaga M."/>
            <person name="Sasaki M."/>
            <person name="Togashi T."/>
            <person name="Oyama M."/>
            <person name="Hata H."/>
            <person name="Watanabe M."/>
            <person name="Komatsu T."/>
            <person name="Mizushima-Sugano J."/>
            <person name="Satoh T."/>
            <person name="Shirai Y."/>
            <person name="Takahashi Y."/>
            <person name="Nakagawa K."/>
            <person name="Okumura K."/>
            <person name="Nagase T."/>
            <person name="Nomura N."/>
            <person name="Kikuchi H."/>
            <person name="Masuho Y."/>
            <person name="Yamashita R."/>
            <person name="Nakai K."/>
            <person name="Yada T."/>
            <person name="Nakamura Y."/>
            <person name="Ohara O."/>
            <person name="Isogai T."/>
            <person name="Sugano S."/>
        </authorList>
    </citation>
    <scope>NUCLEOTIDE SEQUENCE [LARGE SCALE MRNA]</scope>
</reference>
<reference key="2">
    <citation type="journal article" date="2005" name="Nature">
        <title>DNA sequence and analysis of human chromosome 18.</title>
        <authorList>
            <person name="Nusbaum C."/>
            <person name="Zody M.C."/>
            <person name="Borowsky M.L."/>
            <person name="Kamal M."/>
            <person name="Kodira C.D."/>
            <person name="Taylor T.D."/>
            <person name="Whittaker C.A."/>
            <person name="Chang J.L."/>
            <person name="Cuomo C.A."/>
            <person name="Dewar K."/>
            <person name="FitzGerald M.G."/>
            <person name="Yang X."/>
            <person name="Abouelleil A."/>
            <person name="Allen N.R."/>
            <person name="Anderson S."/>
            <person name="Bloom T."/>
            <person name="Bugalter B."/>
            <person name="Butler J."/>
            <person name="Cook A."/>
            <person name="DeCaprio D."/>
            <person name="Engels R."/>
            <person name="Garber M."/>
            <person name="Gnirke A."/>
            <person name="Hafez N."/>
            <person name="Hall J.L."/>
            <person name="Norman C.H."/>
            <person name="Itoh T."/>
            <person name="Jaffe D.B."/>
            <person name="Kuroki Y."/>
            <person name="Lehoczky J."/>
            <person name="Lui A."/>
            <person name="Macdonald P."/>
            <person name="Mauceli E."/>
            <person name="Mikkelsen T.S."/>
            <person name="Naylor J.W."/>
            <person name="Nicol R."/>
            <person name="Nguyen C."/>
            <person name="Noguchi H."/>
            <person name="O'Leary S.B."/>
            <person name="Piqani B."/>
            <person name="Smith C.L."/>
            <person name="Talamas J.A."/>
            <person name="Topham K."/>
            <person name="Totoki Y."/>
            <person name="Toyoda A."/>
            <person name="Wain H.M."/>
            <person name="Young S.K."/>
            <person name="Zeng Q."/>
            <person name="Zimmer A.R."/>
            <person name="Fujiyama A."/>
            <person name="Hattori M."/>
            <person name="Birren B.W."/>
            <person name="Sakaki Y."/>
            <person name="Lander E.S."/>
        </authorList>
    </citation>
    <scope>NUCLEOTIDE SEQUENCE [LARGE SCALE GENOMIC DNA]</scope>
</reference>
<reference key="3">
    <citation type="submission" date="2005-07" db="EMBL/GenBank/DDBJ databases">
        <authorList>
            <person name="Mural R.J."/>
            <person name="Istrail S."/>
            <person name="Sutton G.G."/>
            <person name="Florea L."/>
            <person name="Halpern A.L."/>
            <person name="Mobarry C.M."/>
            <person name="Lippert R."/>
            <person name="Walenz B."/>
            <person name="Shatkay H."/>
            <person name="Dew I."/>
            <person name="Miller J.R."/>
            <person name="Flanigan M.J."/>
            <person name="Edwards N.J."/>
            <person name="Bolanos R."/>
            <person name="Fasulo D."/>
            <person name="Halldorsson B.V."/>
            <person name="Hannenhalli S."/>
            <person name="Turner R."/>
            <person name="Yooseph S."/>
            <person name="Lu F."/>
            <person name="Nusskern D.R."/>
            <person name="Shue B.C."/>
            <person name="Zheng X.H."/>
            <person name="Zhong F."/>
            <person name="Delcher A.L."/>
            <person name="Huson D.H."/>
            <person name="Kravitz S.A."/>
            <person name="Mouchard L."/>
            <person name="Reinert K."/>
            <person name="Remington K.A."/>
            <person name="Clark A.G."/>
            <person name="Waterman M.S."/>
            <person name="Eichler E.E."/>
            <person name="Adams M.D."/>
            <person name="Hunkapiller M.W."/>
            <person name="Myers E.W."/>
            <person name="Venter J.C."/>
        </authorList>
    </citation>
    <scope>NUCLEOTIDE SEQUENCE [LARGE SCALE GENOMIC DNA]</scope>
</reference>
<dbReference type="EMBL" id="AK126293">
    <property type="protein sequence ID" value="BAC86516.1"/>
    <property type="molecule type" value="mRNA"/>
</dbReference>
<dbReference type="EMBL" id="AC018413">
    <property type="status" value="NOT_ANNOTATED_CDS"/>
    <property type="molecule type" value="Genomic_DNA"/>
</dbReference>
<dbReference type="EMBL" id="AMYH02035015">
    <property type="status" value="NOT_ANNOTATED_CDS"/>
    <property type="molecule type" value="Genomic_DNA"/>
</dbReference>
<dbReference type="EMBL" id="CH471117">
    <property type="protein sequence ID" value="EAW66580.1"/>
    <property type="molecule type" value="Genomic_DNA"/>
</dbReference>
<dbReference type="RefSeq" id="NP_001259022.2">
    <property type="nucleotide sequence ID" value="NM_001272093.2"/>
</dbReference>
<dbReference type="iPTMnet" id="Q6ZTR6"/>
<dbReference type="PhosphoSitePlus" id="Q6ZTR6"/>
<dbReference type="BioMuta" id="HGNC:51248"/>
<dbReference type="MassIVE" id="Q6ZTR6"/>
<dbReference type="PaxDb" id="9606-ENSP00000479281"/>
<dbReference type="UCSC" id="uc032hhs.1">
    <property type="organism name" value="human"/>
</dbReference>
<dbReference type="AGR" id="HGNC:51248"/>
<dbReference type="GeneCards" id="ZNF516-DT"/>
<dbReference type="HGNC" id="HGNC:51248">
    <property type="gene designation" value="ZNF516-DT"/>
</dbReference>
<dbReference type="neXtProt" id="NX_Q6ZTR6"/>
<dbReference type="eggNOG" id="ENOG502TEBJ">
    <property type="taxonomic scope" value="Eukaryota"/>
</dbReference>
<dbReference type="InParanoid" id="Q6ZTR6"/>
<dbReference type="PAN-GO" id="Q6ZTR6">
    <property type="GO annotations" value="0 GO annotations based on evolutionary models"/>
</dbReference>
<dbReference type="SignaLink" id="Q6ZTR6"/>
<dbReference type="BioGRID-ORCS" id="400658">
    <property type="hits" value="1 hit in 122 CRISPR screens"/>
</dbReference>
<dbReference type="GenomeRNAi" id="400658"/>
<dbReference type="Pharos" id="Q6ZTR6">
    <property type="development level" value="Tdark"/>
</dbReference>
<dbReference type="Proteomes" id="UP000005640">
    <property type="component" value="Unplaced"/>
</dbReference>
<dbReference type="RNAct" id="Q6ZTR6">
    <property type="molecule type" value="protein"/>
</dbReference>
<proteinExistence type="uncertain"/>